<gene>
    <name evidence="1" type="primary">atpE</name>
    <name evidence="1" type="synonym">atpH</name>
    <name type="ordered locus">Tery_2203</name>
</gene>
<evidence type="ECO:0000255" key="1">
    <source>
        <dbReference type="HAMAP-Rule" id="MF_01396"/>
    </source>
</evidence>
<feature type="chain" id="PRO_1000184524" description="ATP synthase subunit c">
    <location>
        <begin position="1"/>
        <end position="81"/>
    </location>
</feature>
<feature type="transmembrane region" description="Helical" evidence="1">
    <location>
        <begin position="3"/>
        <end position="23"/>
    </location>
</feature>
<feature type="transmembrane region" description="Helical" evidence="1">
    <location>
        <begin position="57"/>
        <end position="77"/>
    </location>
</feature>
<feature type="site" description="Reversibly protonated during proton transport" evidence="1">
    <location>
        <position position="61"/>
    </location>
</feature>
<proteinExistence type="inferred from homology"/>
<comment type="function">
    <text evidence="1">F(1)F(0) ATP synthase produces ATP from ADP in the presence of a proton or sodium gradient. F-type ATPases consist of two structural domains, F(1) containing the extramembraneous catalytic core and F(0) containing the membrane proton channel, linked together by a central stalk and a peripheral stalk. During catalysis, ATP synthesis in the catalytic domain of F(1) is coupled via a rotary mechanism of the central stalk subunits to proton translocation.</text>
</comment>
<comment type="function">
    <text evidence="1">Key component of the F(0) channel; it plays a direct role in translocation across the membrane. A homomeric c-ring of between 10-14 subunits forms the central stalk rotor element with the F(1) delta and epsilon subunits.</text>
</comment>
<comment type="subunit">
    <text evidence="1">F-type ATPases have 2 components, F(1) - the catalytic core - and F(0) - the membrane proton channel. F(1) has five subunits: alpha(3), beta(3), gamma(1), delta(1), epsilon(1). F(0) has four main subunits: a(1), b(1), b'(1) and c(10-14). The alpha and beta chains form an alternating ring which encloses part of the gamma chain. F(1) is attached to F(0) by a central stalk formed by the gamma and epsilon chains, while a peripheral stalk is formed by the delta, b and b' chains.</text>
</comment>
<comment type="subcellular location">
    <subcellularLocation>
        <location evidence="1">Cellular thylakoid membrane</location>
        <topology evidence="1">Multi-pass membrane protein</topology>
    </subcellularLocation>
</comment>
<comment type="similarity">
    <text evidence="1">Belongs to the ATPase C chain family.</text>
</comment>
<accession>Q112Z2</accession>
<sequence length="81" mass="7988">MDPLIAAASVVAAALAVGLGAIGPGIGQGNAAGQAVEGIARQPEAEGKIRGTLLLSLAFMEALTIYGLVVSLVLLFANPFA</sequence>
<dbReference type="EMBL" id="CP000393">
    <property type="protein sequence ID" value="ABG51432.1"/>
    <property type="molecule type" value="Genomic_DNA"/>
</dbReference>
<dbReference type="RefSeq" id="WP_011611801.1">
    <property type="nucleotide sequence ID" value="NC_008312.1"/>
</dbReference>
<dbReference type="SMR" id="Q112Z2"/>
<dbReference type="STRING" id="203124.Tery_2203"/>
<dbReference type="KEGG" id="ter:Tery_2203"/>
<dbReference type="eggNOG" id="COG0636">
    <property type="taxonomic scope" value="Bacteria"/>
</dbReference>
<dbReference type="HOGENOM" id="CLU_148047_2_0_3"/>
<dbReference type="OrthoDB" id="9810379at2"/>
<dbReference type="GO" id="GO:0031676">
    <property type="term" value="C:plasma membrane-derived thylakoid membrane"/>
    <property type="evidence" value="ECO:0007669"/>
    <property type="project" value="UniProtKB-SubCell"/>
</dbReference>
<dbReference type="GO" id="GO:0045259">
    <property type="term" value="C:proton-transporting ATP synthase complex"/>
    <property type="evidence" value="ECO:0007669"/>
    <property type="project" value="UniProtKB-KW"/>
</dbReference>
<dbReference type="GO" id="GO:0033177">
    <property type="term" value="C:proton-transporting two-sector ATPase complex, proton-transporting domain"/>
    <property type="evidence" value="ECO:0007669"/>
    <property type="project" value="InterPro"/>
</dbReference>
<dbReference type="GO" id="GO:0008289">
    <property type="term" value="F:lipid binding"/>
    <property type="evidence" value="ECO:0007669"/>
    <property type="project" value="UniProtKB-KW"/>
</dbReference>
<dbReference type="GO" id="GO:0046933">
    <property type="term" value="F:proton-transporting ATP synthase activity, rotational mechanism"/>
    <property type="evidence" value="ECO:0007669"/>
    <property type="project" value="UniProtKB-UniRule"/>
</dbReference>
<dbReference type="CDD" id="cd18183">
    <property type="entry name" value="ATP-synt_Fo_c_ATPH"/>
    <property type="match status" value="1"/>
</dbReference>
<dbReference type="FunFam" id="1.20.20.10:FF:000001">
    <property type="entry name" value="ATP synthase subunit c, chloroplastic"/>
    <property type="match status" value="1"/>
</dbReference>
<dbReference type="Gene3D" id="1.20.20.10">
    <property type="entry name" value="F1F0 ATP synthase subunit C"/>
    <property type="match status" value="1"/>
</dbReference>
<dbReference type="HAMAP" id="MF_01396">
    <property type="entry name" value="ATP_synth_c_bact"/>
    <property type="match status" value="1"/>
</dbReference>
<dbReference type="InterPro" id="IPR005953">
    <property type="entry name" value="ATP_synth_csu_bac/chlpt"/>
</dbReference>
<dbReference type="InterPro" id="IPR000454">
    <property type="entry name" value="ATP_synth_F0_csu"/>
</dbReference>
<dbReference type="InterPro" id="IPR020537">
    <property type="entry name" value="ATP_synth_F0_csu_DDCD_BS"/>
</dbReference>
<dbReference type="InterPro" id="IPR038662">
    <property type="entry name" value="ATP_synth_F0_csu_sf"/>
</dbReference>
<dbReference type="InterPro" id="IPR002379">
    <property type="entry name" value="ATPase_proteolipid_c-like_dom"/>
</dbReference>
<dbReference type="InterPro" id="IPR035921">
    <property type="entry name" value="F/V-ATP_Csub_sf"/>
</dbReference>
<dbReference type="NCBIfam" id="TIGR01260">
    <property type="entry name" value="ATP_synt_c"/>
    <property type="match status" value="1"/>
</dbReference>
<dbReference type="NCBIfam" id="NF005608">
    <property type="entry name" value="PRK07354.1"/>
    <property type="match status" value="1"/>
</dbReference>
<dbReference type="PANTHER" id="PTHR10031">
    <property type="entry name" value="ATP SYNTHASE LIPID-BINDING PROTEIN, MITOCHONDRIAL"/>
    <property type="match status" value="1"/>
</dbReference>
<dbReference type="PANTHER" id="PTHR10031:SF0">
    <property type="entry name" value="ATPASE PROTEIN 9"/>
    <property type="match status" value="1"/>
</dbReference>
<dbReference type="Pfam" id="PF00137">
    <property type="entry name" value="ATP-synt_C"/>
    <property type="match status" value="1"/>
</dbReference>
<dbReference type="PRINTS" id="PR00124">
    <property type="entry name" value="ATPASEC"/>
</dbReference>
<dbReference type="SUPFAM" id="SSF81333">
    <property type="entry name" value="F1F0 ATP synthase subunit C"/>
    <property type="match status" value="1"/>
</dbReference>
<dbReference type="PROSITE" id="PS00605">
    <property type="entry name" value="ATPASE_C"/>
    <property type="match status" value="1"/>
</dbReference>
<keyword id="KW-0066">ATP synthesis</keyword>
<keyword id="KW-0138">CF(0)</keyword>
<keyword id="KW-0375">Hydrogen ion transport</keyword>
<keyword id="KW-0406">Ion transport</keyword>
<keyword id="KW-0446">Lipid-binding</keyword>
<keyword id="KW-0472">Membrane</keyword>
<keyword id="KW-0793">Thylakoid</keyword>
<keyword id="KW-0812">Transmembrane</keyword>
<keyword id="KW-1133">Transmembrane helix</keyword>
<keyword id="KW-0813">Transport</keyword>
<name>ATPL_TRIEI</name>
<reference key="1">
    <citation type="journal article" date="2015" name="Proc. Natl. Acad. Sci. U.S.A.">
        <title>Trichodesmium genome maintains abundant, widespread noncoding DNA in situ, despite oligotrophic lifestyle.</title>
        <authorList>
            <person name="Walworth N."/>
            <person name="Pfreundt U."/>
            <person name="Nelson W.C."/>
            <person name="Mincer T."/>
            <person name="Heidelberg J.F."/>
            <person name="Fu F."/>
            <person name="Waterbury J.B."/>
            <person name="Glavina del Rio T."/>
            <person name="Goodwin L."/>
            <person name="Kyrpides N.C."/>
            <person name="Land M.L."/>
            <person name="Woyke T."/>
            <person name="Hutchins D.A."/>
            <person name="Hess W.R."/>
            <person name="Webb E.A."/>
        </authorList>
    </citation>
    <scope>NUCLEOTIDE SEQUENCE [LARGE SCALE GENOMIC DNA]</scope>
    <source>
        <strain>IMS101</strain>
    </source>
</reference>
<protein>
    <recommendedName>
        <fullName evidence="1">ATP synthase subunit c</fullName>
    </recommendedName>
    <alternativeName>
        <fullName evidence="1">ATP synthase F(0) sector subunit c</fullName>
    </alternativeName>
    <alternativeName>
        <fullName evidence="1">F-type ATPase subunit c</fullName>
        <shortName evidence="1">F-ATPase subunit c</shortName>
    </alternativeName>
    <alternativeName>
        <fullName evidence="1">Lipid-binding protein</fullName>
    </alternativeName>
</protein>
<organism>
    <name type="scientific">Trichodesmium erythraeum (strain IMS101)</name>
    <dbReference type="NCBI Taxonomy" id="203124"/>
    <lineage>
        <taxon>Bacteria</taxon>
        <taxon>Bacillati</taxon>
        <taxon>Cyanobacteriota</taxon>
        <taxon>Cyanophyceae</taxon>
        <taxon>Oscillatoriophycideae</taxon>
        <taxon>Oscillatoriales</taxon>
        <taxon>Microcoleaceae</taxon>
        <taxon>Trichodesmium</taxon>
    </lineage>
</organism>